<keyword id="KW-0414">Isoprene biosynthesis</keyword>
<keyword id="KW-0464">Manganese</keyword>
<keyword id="KW-0479">Metal-binding</keyword>
<keyword id="KW-0521">NADP</keyword>
<keyword id="KW-0560">Oxidoreductase</keyword>
<keyword id="KW-1185">Reference proteome</keyword>
<dbReference type="EC" id="1.1.1.267" evidence="1"/>
<dbReference type="EMBL" id="CP000727">
    <property type="protein sequence ID" value="ABS37461.1"/>
    <property type="molecule type" value="Genomic_DNA"/>
</dbReference>
<dbReference type="EMBL" id="AM412317">
    <property type="protein sequence ID" value="CAL83974.1"/>
    <property type="molecule type" value="Genomic_DNA"/>
</dbReference>
<dbReference type="RefSeq" id="WP_011986796.1">
    <property type="nucleotide sequence ID" value="NC_009698.1"/>
</dbReference>
<dbReference type="RefSeq" id="YP_001254923.1">
    <property type="nucleotide sequence ID" value="NC_009495.1"/>
</dbReference>
<dbReference type="RefSeq" id="YP_001388117.1">
    <property type="nucleotide sequence ID" value="NC_009698.1"/>
</dbReference>
<dbReference type="SMR" id="A5I4K2"/>
<dbReference type="GeneID" id="5186681"/>
<dbReference type="KEGG" id="cbh:CLC_2273"/>
<dbReference type="KEGG" id="cbo:CBO2426"/>
<dbReference type="PATRIC" id="fig|413999.7.peg.2403"/>
<dbReference type="HOGENOM" id="CLU_035714_4_0_9"/>
<dbReference type="UniPathway" id="UPA00056">
    <property type="reaction ID" value="UER00092"/>
</dbReference>
<dbReference type="PRO" id="PR:A5I4K2"/>
<dbReference type="Proteomes" id="UP000001986">
    <property type="component" value="Chromosome"/>
</dbReference>
<dbReference type="GO" id="GO:0030604">
    <property type="term" value="F:1-deoxy-D-xylulose-5-phosphate reductoisomerase activity"/>
    <property type="evidence" value="ECO:0000318"/>
    <property type="project" value="GO_Central"/>
</dbReference>
<dbReference type="GO" id="GO:0030145">
    <property type="term" value="F:manganese ion binding"/>
    <property type="evidence" value="ECO:0000318"/>
    <property type="project" value="GO_Central"/>
</dbReference>
<dbReference type="GO" id="GO:0070402">
    <property type="term" value="F:NADPH binding"/>
    <property type="evidence" value="ECO:0000318"/>
    <property type="project" value="GO_Central"/>
</dbReference>
<dbReference type="GO" id="GO:0051484">
    <property type="term" value="P:isopentenyl diphosphate biosynthetic process, methylerythritol 4-phosphate pathway involved in terpenoid biosynthetic process"/>
    <property type="evidence" value="ECO:0000318"/>
    <property type="project" value="GO_Central"/>
</dbReference>
<dbReference type="FunFam" id="3.40.50.720:FF:000045">
    <property type="entry name" value="1-deoxy-D-xylulose 5-phosphate reductoisomerase"/>
    <property type="match status" value="1"/>
</dbReference>
<dbReference type="Gene3D" id="1.10.1740.10">
    <property type="match status" value="1"/>
</dbReference>
<dbReference type="Gene3D" id="3.40.50.720">
    <property type="entry name" value="NAD(P)-binding Rossmann-like Domain"/>
    <property type="match status" value="1"/>
</dbReference>
<dbReference type="HAMAP" id="MF_00183">
    <property type="entry name" value="DXP_reductoisom"/>
    <property type="match status" value="1"/>
</dbReference>
<dbReference type="InterPro" id="IPR003821">
    <property type="entry name" value="DXP_reductoisomerase"/>
</dbReference>
<dbReference type="InterPro" id="IPR013644">
    <property type="entry name" value="DXP_reductoisomerase_C"/>
</dbReference>
<dbReference type="InterPro" id="IPR013512">
    <property type="entry name" value="DXP_reductoisomerase_N"/>
</dbReference>
<dbReference type="InterPro" id="IPR026877">
    <property type="entry name" value="DXPR_C"/>
</dbReference>
<dbReference type="InterPro" id="IPR036169">
    <property type="entry name" value="DXPR_C_sf"/>
</dbReference>
<dbReference type="InterPro" id="IPR036291">
    <property type="entry name" value="NAD(P)-bd_dom_sf"/>
</dbReference>
<dbReference type="NCBIfam" id="TIGR00243">
    <property type="entry name" value="Dxr"/>
    <property type="match status" value="1"/>
</dbReference>
<dbReference type="NCBIfam" id="NF009114">
    <property type="entry name" value="PRK12464.1"/>
    <property type="match status" value="1"/>
</dbReference>
<dbReference type="PANTHER" id="PTHR30525">
    <property type="entry name" value="1-DEOXY-D-XYLULOSE 5-PHOSPHATE REDUCTOISOMERASE"/>
    <property type="match status" value="1"/>
</dbReference>
<dbReference type="PANTHER" id="PTHR30525:SF0">
    <property type="entry name" value="1-DEOXY-D-XYLULOSE 5-PHOSPHATE REDUCTOISOMERASE, CHLOROPLASTIC"/>
    <property type="match status" value="1"/>
</dbReference>
<dbReference type="Pfam" id="PF08436">
    <property type="entry name" value="DXP_redisom_C"/>
    <property type="match status" value="1"/>
</dbReference>
<dbReference type="Pfam" id="PF02670">
    <property type="entry name" value="DXP_reductoisom"/>
    <property type="match status" value="1"/>
</dbReference>
<dbReference type="Pfam" id="PF13288">
    <property type="entry name" value="DXPR_C"/>
    <property type="match status" value="1"/>
</dbReference>
<dbReference type="PIRSF" id="PIRSF006205">
    <property type="entry name" value="Dxp_reductismrs"/>
    <property type="match status" value="1"/>
</dbReference>
<dbReference type="SUPFAM" id="SSF69055">
    <property type="entry name" value="1-deoxy-D-xylulose-5-phosphate reductoisomerase, C-terminal domain"/>
    <property type="match status" value="1"/>
</dbReference>
<dbReference type="SUPFAM" id="SSF55347">
    <property type="entry name" value="Glyceraldehyde-3-phosphate dehydrogenase-like, C-terminal domain"/>
    <property type="match status" value="1"/>
</dbReference>
<dbReference type="SUPFAM" id="SSF51735">
    <property type="entry name" value="NAD(P)-binding Rossmann-fold domains"/>
    <property type="match status" value="1"/>
</dbReference>
<sequence>MKNITILGATGSIGTQTLDVIRREKEELKLVAISANKSDKKVIEIIKEFKPKYAVLMEENAFKIVEDFCIDNKIDTKVLKGMEGMIYISTLEEVNTVVTSVVGMIGLVPTIKAIESGKDIALANKETLVVAGELVISKAKEHNVNILPVDSEHGAIFQCLRGNKKEEVKNIIVTASGGPFRGKKKEELIDVKPEHALKHPKWNMGRKISIDSATLMNKGLEVIEAHFLFGVDYENIKVVVHPQSIVHSMVEYKDGSVIAQMATPDMKLPIQYALNYPNRKESQIEPLDFYKISNLTFEKPDMDTFLPLKLAYEAGKKGGVMPAILNGANEVAVDLFLKGKIEFLQIGDLLQECMNKFYKSMEATLENVISVDKEVREYLGKKYDI</sequence>
<comment type="function">
    <text evidence="1">Catalyzes the NADPH-dependent rearrangement and reduction of 1-deoxy-D-xylulose-5-phosphate (DXP) to 2-C-methyl-D-erythritol 4-phosphate (MEP).</text>
</comment>
<comment type="catalytic activity">
    <reaction evidence="1">
        <text>2-C-methyl-D-erythritol 4-phosphate + NADP(+) = 1-deoxy-D-xylulose 5-phosphate + NADPH + H(+)</text>
        <dbReference type="Rhea" id="RHEA:13717"/>
        <dbReference type="ChEBI" id="CHEBI:15378"/>
        <dbReference type="ChEBI" id="CHEBI:57783"/>
        <dbReference type="ChEBI" id="CHEBI:57792"/>
        <dbReference type="ChEBI" id="CHEBI:58262"/>
        <dbReference type="ChEBI" id="CHEBI:58349"/>
        <dbReference type="EC" id="1.1.1.267"/>
    </reaction>
    <physiologicalReaction direction="right-to-left" evidence="1">
        <dbReference type="Rhea" id="RHEA:13719"/>
    </physiologicalReaction>
</comment>
<comment type="cofactor">
    <cofactor evidence="1">
        <name>Mg(2+)</name>
        <dbReference type="ChEBI" id="CHEBI:18420"/>
    </cofactor>
    <cofactor evidence="1">
        <name>Mn(2+)</name>
        <dbReference type="ChEBI" id="CHEBI:29035"/>
    </cofactor>
</comment>
<comment type="pathway">
    <text evidence="1">Isoprenoid biosynthesis; isopentenyl diphosphate biosynthesis via DXP pathway; isopentenyl diphosphate from 1-deoxy-D-xylulose 5-phosphate: step 1/6.</text>
</comment>
<comment type="similarity">
    <text evidence="1">Belongs to the DXR family.</text>
</comment>
<name>DXR_CLOBH</name>
<feature type="chain" id="PRO_1000020247" description="1-deoxy-D-xylulose 5-phosphate reductoisomerase">
    <location>
        <begin position="1"/>
        <end position="385"/>
    </location>
</feature>
<feature type="binding site" evidence="1">
    <location>
        <position position="10"/>
    </location>
    <ligand>
        <name>NADPH</name>
        <dbReference type="ChEBI" id="CHEBI:57783"/>
    </ligand>
</feature>
<feature type="binding site" evidence="1">
    <location>
        <position position="11"/>
    </location>
    <ligand>
        <name>NADPH</name>
        <dbReference type="ChEBI" id="CHEBI:57783"/>
    </ligand>
</feature>
<feature type="binding site" evidence="1">
    <location>
        <position position="12"/>
    </location>
    <ligand>
        <name>NADPH</name>
        <dbReference type="ChEBI" id="CHEBI:57783"/>
    </ligand>
</feature>
<feature type="binding site" evidence="1">
    <location>
        <position position="13"/>
    </location>
    <ligand>
        <name>NADPH</name>
        <dbReference type="ChEBI" id="CHEBI:57783"/>
    </ligand>
</feature>
<feature type="binding site" evidence="1">
    <location>
        <position position="37"/>
    </location>
    <ligand>
        <name>NADPH</name>
        <dbReference type="ChEBI" id="CHEBI:57783"/>
    </ligand>
</feature>
<feature type="binding site" evidence="1">
    <location>
        <position position="124"/>
    </location>
    <ligand>
        <name>NADPH</name>
        <dbReference type="ChEBI" id="CHEBI:57783"/>
    </ligand>
</feature>
<feature type="binding site" evidence="1">
    <location>
        <position position="125"/>
    </location>
    <ligand>
        <name>1-deoxy-D-xylulose 5-phosphate</name>
        <dbReference type="ChEBI" id="CHEBI:57792"/>
    </ligand>
</feature>
<feature type="binding site" evidence="1">
    <location>
        <position position="126"/>
    </location>
    <ligand>
        <name>NADPH</name>
        <dbReference type="ChEBI" id="CHEBI:57783"/>
    </ligand>
</feature>
<feature type="binding site" evidence="1">
    <location>
        <position position="150"/>
    </location>
    <ligand>
        <name>Mn(2+)</name>
        <dbReference type="ChEBI" id="CHEBI:29035"/>
    </ligand>
</feature>
<feature type="binding site" evidence="1">
    <location>
        <position position="151"/>
    </location>
    <ligand>
        <name>1-deoxy-D-xylulose 5-phosphate</name>
        <dbReference type="ChEBI" id="CHEBI:57792"/>
    </ligand>
</feature>
<feature type="binding site" evidence="1">
    <location>
        <position position="152"/>
    </location>
    <ligand>
        <name>1-deoxy-D-xylulose 5-phosphate</name>
        <dbReference type="ChEBI" id="CHEBI:57792"/>
    </ligand>
</feature>
<feature type="binding site" evidence="1">
    <location>
        <position position="152"/>
    </location>
    <ligand>
        <name>Mn(2+)</name>
        <dbReference type="ChEBI" id="CHEBI:29035"/>
    </ligand>
</feature>
<feature type="binding site" evidence="1">
    <location>
        <position position="176"/>
    </location>
    <ligand>
        <name>1-deoxy-D-xylulose 5-phosphate</name>
        <dbReference type="ChEBI" id="CHEBI:57792"/>
    </ligand>
</feature>
<feature type="binding site" evidence="1">
    <location>
        <position position="199"/>
    </location>
    <ligand>
        <name>1-deoxy-D-xylulose 5-phosphate</name>
        <dbReference type="ChEBI" id="CHEBI:57792"/>
    </ligand>
</feature>
<feature type="binding site" evidence="1">
    <location>
        <position position="205"/>
    </location>
    <ligand>
        <name>NADPH</name>
        <dbReference type="ChEBI" id="CHEBI:57783"/>
    </ligand>
</feature>
<feature type="binding site" evidence="1">
    <location>
        <position position="212"/>
    </location>
    <ligand>
        <name>1-deoxy-D-xylulose 5-phosphate</name>
        <dbReference type="ChEBI" id="CHEBI:57792"/>
    </ligand>
</feature>
<feature type="binding site" evidence="1">
    <location>
        <position position="217"/>
    </location>
    <ligand>
        <name>1-deoxy-D-xylulose 5-phosphate</name>
        <dbReference type="ChEBI" id="CHEBI:57792"/>
    </ligand>
</feature>
<feature type="binding site" evidence="1">
    <location>
        <position position="218"/>
    </location>
    <ligand>
        <name>1-deoxy-D-xylulose 5-phosphate</name>
        <dbReference type="ChEBI" id="CHEBI:57792"/>
    </ligand>
</feature>
<feature type="binding site" evidence="1">
    <location>
        <position position="221"/>
    </location>
    <ligand>
        <name>1-deoxy-D-xylulose 5-phosphate</name>
        <dbReference type="ChEBI" id="CHEBI:57792"/>
    </ligand>
</feature>
<feature type="binding site" evidence="1">
    <location>
        <position position="221"/>
    </location>
    <ligand>
        <name>Mn(2+)</name>
        <dbReference type="ChEBI" id="CHEBI:29035"/>
    </ligand>
</feature>
<evidence type="ECO:0000255" key="1">
    <source>
        <dbReference type="HAMAP-Rule" id="MF_00183"/>
    </source>
</evidence>
<gene>
    <name evidence="1" type="primary">dxr</name>
    <name type="ordered locus">CBO2426</name>
    <name type="ordered locus">CLC_2273</name>
</gene>
<organism>
    <name type="scientific">Clostridium botulinum (strain Hall / ATCC 3502 / NCTC 13319 / Type A)</name>
    <dbReference type="NCBI Taxonomy" id="441771"/>
    <lineage>
        <taxon>Bacteria</taxon>
        <taxon>Bacillati</taxon>
        <taxon>Bacillota</taxon>
        <taxon>Clostridia</taxon>
        <taxon>Eubacteriales</taxon>
        <taxon>Clostridiaceae</taxon>
        <taxon>Clostridium</taxon>
    </lineage>
</organism>
<protein>
    <recommendedName>
        <fullName evidence="1">1-deoxy-D-xylulose 5-phosphate reductoisomerase</fullName>
        <shortName evidence="1">DXP reductoisomerase</shortName>
        <ecNumber evidence="1">1.1.1.267</ecNumber>
    </recommendedName>
    <alternativeName>
        <fullName evidence="1">1-deoxyxylulose-5-phosphate reductoisomerase</fullName>
    </alternativeName>
    <alternativeName>
        <fullName evidence="1">2-C-methyl-D-erythritol 4-phosphate synthase</fullName>
    </alternativeName>
</protein>
<accession>A5I4K2</accession>
<accession>A7G5Q2</accession>
<reference key="1">
    <citation type="journal article" date="2007" name="Genome Res.">
        <title>Genome sequence of a proteolytic (Group I) Clostridium botulinum strain Hall A and comparative analysis of the clostridial genomes.</title>
        <authorList>
            <person name="Sebaihia M."/>
            <person name="Peck M.W."/>
            <person name="Minton N.P."/>
            <person name="Thomson N.R."/>
            <person name="Holden M.T.G."/>
            <person name="Mitchell W.J."/>
            <person name="Carter A.T."/>
            <person name="Bentley S.D."/>
            <person name="Mason D.R."/>
            <person name="Crossman L."/>
            <person name="Paul C.J."/>
            <person name="Ivens A."/>
            <person name="Wells-Bennik M.H.J."/>
            <person name="Davis I.J."/>
            <person name="Cerdeno-Tarraga A.M."/>
            <person name="Churcher C."/>
            <person name="Quail M.A."/>
            <person name="Chillingworth T."/>
            <person name="Feltwell T."/>
            <person name="Fraser A."/>
            <person name="Goodhead I."/>
            <person name="Hance Z."/>
            <person name="Jagels K."/>
            <person name="Larke N."/>
            <person name="Maddison M."/>
            <person name="Moule S."/>
            <person name="Mungall K."/>
            <person name="Norbertczak H."/>
            <person name="Rabbinowitsch E."/>
            <person name="Sanders M."/>
            <person name="Simmonds M."/>
            <person name="White B."/>
            <person name="Whithead S."/>
            <person name="Parkhill J."/>
        </authorList>
    </citation>
    <scope>NUCLEOTIDE SEQUENCE [LARGE SCALE GENOMIC DNA]</scope>
    <source>
        <strain>Hall / ATCC 3502 / NCTC 13319 / Type A</strain>
    </source>
</reference>
<reference key="2">
    <citation type="journal article" date="2007" name="PLoS ONE">
        <title>Analysis of the neurotoxin complex genes in Clostridium botulinum A1-A4 and B1 strains: BoNT/A3, /Ba4 and /B1 clusters are located within plasmids.</title>
        <authorList>
            <person name="Smith T.J."/>
            <person name="Hill K.K."/>
            <person name="Foley B.T."/>
            <person name="Detter J.C."/>
            <person name="Munk A.C."/>
            <person name="Bruce D.C."/>
            <person name="Doggett N.A."/>
            <person name="Smith L.A."/>
            <person name="Marks J.D."/>
            <person name="Xie G."/>
            <person name="Brettin T.S."/>
        </authorList>
    </citation>
    <scope>NUCLEOTIDE SEQUENCE [LARGE SCALE GENOMIC DNA]</scope>
    <source>
        <strain>Hall / ATCC 3502 / NCTC 13319 / Type A</strain>
    </source>
</reference>
<proteinExistence type="inferred from homology"/>